<name>HSFB4_ARATH</name>
<accession>Q9C635</accession>
<evidence type="ECO:0000250" key="1"/>
<evidence type="ECO:0000255" key="2"/>
<evidence type="ECO:0000305" key="3"/>
<keyword id="KW-0963">Cytoplasm</keyword>
<keyword id="KW-0238">DNA-binding</keyword>
<keyword id="KW-0539">Nucleus</keyword>
<keyword id="KW-0597">Phosphoprotein</keyword>
<keyword id="KW-1185">Reference proteome</keyword>
<keyword id="KW-0346">Stress response</keyword>
<keyword id="KW-0804">Transcription</keyword>
<keyword id="KW-0805">Transcription regulation</keyword>
<protein>
    <recommendedName>
        <fullName>Heat stress transcription factor B-4</fullName>
        <shortName>AtHsfB4</shortName>
    </recommendedName>
    <alternativeName>
        <fullName>AtHsf-02</fullName>
    </alternativeName>
</protein>
<organism>
    <name type="scientific">Arabidopsis thaliana</name>
    <name type="common">Mouse-ear cress</name>
    <dbReference type="NCBI Taxonomy" id="3702"/>
    <lineage>
        <taxon>Eukaryota</taxon>
        <taxon>Viridiplantae</taxon>
        <taxon>Streptophyta</taxon>
        <taxon>Embryophyta</taxon>
        <taxon>Tracheophyta</taxon>
        <taxon>Spermatophyta</taxon>
        <taxon>Magnoliopsida</taxon>
        <taxon>eudicotyledons</taxon>
        <taxon>Gunneridae</taxon>
        <taxon>Pentapetalae</taxon>
        <taxon>rosids</taxon>
        <taxon>malvids</taxon>
        <taxon>Brassicales</taxon>
        <taxon>Brassicaceae</taxon>
        <taxon>Camelineae</taxon>
        <taxon>Arabidopsis</taxon>
    </lineage>
</organism>
<gene>
    <name type="primary">HSFB4</name>
    <name type="synonym">HSF02</name>
    <name type="ordered locus">At1g46264</name>
    <name type="ORF">F2G19.8</name>
</gene>
<reference key="1">
    <citation type="journal article" date="2000" name="Nature">
        <title>Sequence and analysis of chromosome 1 of the plant Arabidopsis thaliana.</title>
        <authorList>
            <person name="Theologis A."/>
            <person name="Ecker J.R."/>
            <person name="Palm C.J."/>
            <person name="Federspiel N.A."/>
            <person name="Kaul S."/>
            <person name="White O."/>
            <person name="Alonso J."/>
            <person name="Altafi H."/>
            <person name="Araujo R."/>
            <person name="Bowman C.L."/>
            <person name="Brooks S.Y."/>
            <person name="Buehler E."/>
            <person name="Chan A."/>
            <person name="Chao Q."/>
            <person name="Chen H."/>
            <person name="Cheuk R.F."/>
            <person name="Chin C.W."/>
            <person name="Chung M.K."/>
            <person name="Conn L."/>
            <person name="Conway A.B."/>
            <person name="Conway A.R."/>
            <person name="Creasy T.H."/>
            <person name="Dewar K."/>
            <person name="Dunn P."/>
            <person name="Etgu P."/>
            <person name="Feldblyum T.V."/>
            <person name="Feng J.-D."/>
            <person name="Fong B."/>
            <person name="Fujii C.Y."/>
            <person name="Gill J.E."/>
            <person name="Goldsmith A.D."/>
            <person name="Haas B."/>
            <person name="Hansen N.F."/>
            <person name="Hughes B."/>
            <person name="Huizar L."/>
            <person name="Hunter J.L."/>
            <person name="Jenkins J."/>
            <person name="Johnson-Hopson C."/>
            <person name="Khan S."/>
            <person name="Khaykin E."/>
            <person name="Kim C.J."/>
            <person name="Koo H.L."/>
            <person name="Kremenetskaia I."/>
            <person name="Kurtz D.B."/>
            <person name="Kwan A."/>
            <person name="Lam B."/>
            <person name="Langin-Hooper S."/>
            <person name="Lee A."/>
            <person name="Lee J.M."/>
            <person name="Lenz C.A."/>
            <person name="Li J.H."/>
            <person name="Li Y.-P."/>
            <person name="Lin X."/>
            <person name="Liu S.X."/>
            <person name="Liu Z.A."/>
            <person name="Luros J.S."/>
            <person name="Maiti R."/>
            <person name="Marziali A."/>
            <person name="Militscher J."/>
            <person name="Miranda M."/>
            <person name="Nguyen M."/>
            <person name="Nierman W.C."/>
            <person name="Osborne B.I."/>
            <person name="Pai G."/>
            <person name="Peterson J."/>
            <person name="Pham P.K."/>
            <person name="Rizzo M."/>
            <person name="Rooney T."/>
            <person name="Rowley D."/>
            <person name="Sakano H."/>
            <person name="Salzberg S.L."/>
            <person name="Schwartz J.R."/>
            <person name="Shinn P."/>
            <person name="Southwick A.M."/>
            <person name="Sun H."/>
            <person name="Tallon L.J."/>
            <person name="Tambunga G."/>
            <person name="Toriumi M.J."/>
            <person name="Town C.D."/>
            <person name="Utterback T."/>
            <person name="Van Aken S."/>
            <person name="Vaysberg M."/>
            <person name="Vysotskaia V.S."/>
            <person name="Walker M."/>
            <person name="Wu D."/>
            <person name="Yu G."/>
            <person name="Fraser C.M."/>
            <person name="Venter J.C."/>
            <person name="Davis R.W."/>
        </authorList>
    </citation>
    <scope>NUCLEOTIDE SEQUENCE [LARGE SCALE GENOMIC DNA]</scope>
    <source>
        <strain>cv. Columbia</strain>
    </source>
</reference>
<reference key="2">
    <citation type="journal article" date="2017" name="Plant J.">
        <title>Araport11: a complete reannotation of the Arabidopsis thaliana reference genome.</title>
        <authorList>
            <person name="Cheng C.Y."/>
            <person name="Krishnakumar V."/>
            <person name="Chan A.P."/>
            <person name="Thibaud-Nissen F."/>
            <person name="Schobel S."/>
            <person name="Town C.D."/>
        </authorList>
    </citation>
    <scope>GENOME REANNOTATION</scope>
    <source>
        <strain>cv. Columbia</strain>
    </source>
</reference>
<reference key="3">
    <citation type="journal article" date="2004" name="Genome Res.">
        <title>Whole genome sequence comparisons and 'full-length' cDNA sequences: a combined approach to evaluate and improve Arabidopsis genome annotation.</title>
        <authorList>
            <person name="Castelli V."/>
            <person name="Aury J.-M."/>
            <person name="Jaillon O."/>
            <person name="Wincker P."/>
            <person name="Clepet C."/>
            <person name="Menard M."/>
            <person name="Cruaud C."/>
            <person name="Quetier F."/>
            <person name="Scarpelli C."/>
            <person name="Schaechter V."/>
            <person name="Temple G."/>
            <person name="Caboche M."/>
            <person name="Weissenbach J."/>
            <person name="Salanoubat M."/>
        </authorList>
    </citation>
    <scope>NUCLEOTIDE SEQUENCE [LARGE SCALE MRNA]</scope>
    <source>
        <strain>cv. Columbia</strain>
    </source>
</reference>
<reference key="4">
    <citation type="journal article" date="2001" name="Cell Stress Chaperones">
        <title>Arabidopsis and the heat stress transcription factor world: how many heat stress transcription factors do we need?</title>
        <authorList>
            <person name="Nover L."/>
            <person name="Bharti K."/>
            <person name="Doering P."/>
            <person name="Mishra S.K."/>
            <person name="Ganguli A."/>
            <person name="Scharf K.-D."/>
        </authorList>
    </citation>
    <scope>GENE FAMILY</scope>
    <scope>NOMENCLATURE</scope>
</reference>
<reference key="5">
    <citation type="journal article" date="2008" name="J. Genet. Genomics">
        <title>Genome-wide analysis of heat shock transcription factor families in rice and Arabidopsis.</title>
        <authorList>
            <person name="Guo J."/>
            <person name="Wu J."/>
            <person name="Ji Q."/>
            <person name="Wang C."/>
            <person name="Luo L."/>
            <person name="Yuan Y."/>
            <person name="Wang Y."/>
            <person name="Wang J."/>
        </authorList>
    </citation>
    <scope>GENE FAMILY</scope>
    <scope>NOMENCLATURE</scope>
</reference>
<proteinExistence type="evidence at transcript level"/>
<dbReference type="EMBL" id="AC083835">
    <property type="protein sequence ID" value="AAG50634.1"/>
    <property type="molecule type" value="Genomic_DNA"/>
</dbReference>
<dbReference type="EMBL" id="CP002684">
    <property type="protein sequence ID" value="AEE32124.1"/>
    <property type="molecule type" value="Genomic_DNA"/>
</dbReference>
<dbReference type="EMBL" id="BX814533">
    <property type="status" value="NOT_ANNOTATED_CDS"/>
    <property type="molecule type" value="mRNA"/>
</dbReference>
<dbReference type="PIR" id="C96511">
    <property type="entry name" value="C96511"/>
</dbReference>
<dbReference type="RefSeq" id="NP_175142.1">
    <property type="nucleotide sequence ID" value="NM_103602.3"/>
</dbReference>
<dbReference type="SMR" id="Q9C635"/>
<dbReference type="FunCoup" id="Q9C635">
    <property type="interactions" value="76"/>
</dbReference>
<dbReference type="STRING" id="3702.Q9C635"/>
<dbReference type="PaxDb" id="3702-AT1G46264.1"/>
<dbReference type="ProteomicsDB" id="232111"/>
<dbReference type="EnsemblPlants" id="AT1G46264.1">
    <property type="protein sequence ID" value="AT1G46264.1"/>
    <property type="gene ID" value="AT1G46264"/>
</dbReference>
<dbReference type="GeneID" id="841110"/>
<dbReference type="Gramene" id="AT1G46264.1">
    <property type="protein sequence ID" value="AT1G46264.1"/>
    <property type="gene ID" value="AT1G46264"/>
</dbReference>
<dbReference type="KEGG" id="ath:AT1G46264"/>
<dbReference type="Araport" id="AT1G46264"/>
<dbReference type="TAIR" id="AT1G46264">
    <property type="gene designation" value="HSFB4"/>
</dbReference>
<dbReference type="eggNOG" id="KOG0627">
    <property type="taxonomic scope" value="Eukaryota"/>
</dbReference>
<dbReference type="HOGENOM" id="CLU_030308_3_1_1"/>
<dbReference type="InParanoid" id="Q9C635"/>
<dbReference type="OMA" id="DRYWCES"/>
<dbReference type="PhylomeDB" id="Q9C635"/>
<dbReference type="PRO" id="PR:Q9C635"/>
<dbReference type="Proteomes" id="UP000006548">
    <property type="component" value="Chromosome 1"/>
</dbReference>
<dbReference type="ExpressionAtlas" id="Q9C635">
    <property type="expression patterns" value="baseline and differential"/>
</dbReference>
<dbReference type="GO" id="GO:0005737">
    <property type="term" value="C:cytoplasm"/>
    <property type="evidence" value="ECO:0007669"/>
    <property type="project" value="UniProtKB-SubCell"/>
</dbReference>
<dbReference type="GO" id="GO:0005634">
    <property type="term" value="C:nucleus"/>
    <property type="evidence" value="ECO:0007669"/>
    <property type="project" value="UniProtKB-SubCell"/>
</dbReference>
<dbReference type="GO" id="GO:0003700">
    <property type="term" value="F:DNA-binding transcription factor activity"/>
    <property type="evidence" value="ECO:0000250"/>
    <property type="project" value="TAIR"/>
</dbReference>
<dbReference type="GO" id="GO:0043565">
    <property type="term" value="F:sequence-specific DNA binding"/>
    <property type="evidence" value="ECO:0007669"/>
    <property type="project" value="InterPro"/>
</dbReference>
<dbReference type="GO" id="GO:0008356">
    <property type="term" value="P:asymmetric cell division"/>
    <property type="evidence" value="ECO:0000315"/>
    <property type="project" value="TAIR"/>
</dbReference>
<dbReference type="FunFam" id="1.10.10.10:FF:000037">
    <property type="entry name" value="Heat stress transcription factor B-4"/>
    <property type="match status" value="1"/>
</dbReference>
<dbReference type="Gene3D" id="1.10.10.10">
    <property type="entry name" value="Winged helix-like DNA-binding domain superfamily/Winged helix DNA-binding domain"/>
    <property type="match status" value="1"/>
</dbReference>
<dbReference type="InterPro" id="IPR000232">
    <property type="entry name" value="HSF_DNA-bd"/>
</dbReference>
<dbReference type="InterPro" id="IPR036388">
    <property type="entry name" value="WH-like_DNA-bd_sf"/>
</dbReference>
<dbReference type="InterPro" id="IPR036390">
    <property type="entry name" value="WH_DNA-bd_sf"/>
</dbReference>
<dbReference type="PANTHER" id="PTHR10015">
    <property type="entry name" value="HEAT SHOCK TRANSCRIPTION FACTOR"/>
    <property type="match status" value="1"/>
</dbReference>
<dbReference type="PANTHER" id="PTHR10015:SF400">
    <property type="entry name" value="HEAT STRESS TRANSCRIPTION FACTOR B-4"/>
    <property type="match status" value="1"/>
</dbReference>
<dbReference type="Pfam" id="PF00447">
    <property type="entry name" value="HSF_DNA-bind"/>
    <property type="match status" value="1"/>
</dbReference>
<dbReference type="PRINTS" id="PR00056">
    <property type="entry name" value="HSFDOMAIN"/>
</dbReference>
<dbReference type="SMART" id="SM00415">
    <property type="entry name" value="HSF"/>
    <property type="match status" value="1"/>
</dbReference>
<dbReference type="SUPFAM" id="SSF46785">
    <property type="entry name" value="Winged helix' DNA-binding domain"/>
    <property type="match status" value="1"/>
</dbReference>
<dbReference type="PROSITE" id="PS00434">
    <property type="entry name" value="HSF_DOMAIN"/>
    <property type="match status" value="1"/>
</dbReference>
<comment type="function">
    <text>Transcriptional regulator that specifically binds DNA sequence 5'-AGAAnnTTCT-3' known as heat shock promoter elements (HSE).</text>
</comment>
<comment type="subunit">
    <text evidence="1">Homotrimer.</text>
</comment>
<comment type="subcellular location">
    <subcellularLocation>
        <location evidence="3">Cytoplasm</location>
    </subcellularLocation>
    <subcellularLocation>
        <location evidence="3">Nucleus</location>
    </subcellularLocation>
</comment>
<comment type="domain">
    <text>The hydrophobic-rich region (HR-A/B) corresponds to the oligomerization domain.</text>
</comment>
<comment type="PTM">
    <text evidence="1">Exhibits temperature-dependent phosphorylation.</text>
</comment>
<comment type="similarity">
    <text evidence="3">Belongs to the HSF family. Class B subfamily.</text>
</comment>
<sequence length="348" mass="39615">MAMMVENSYGGYGGGGGERIQLMVEGQGKAVPAPFLTKTYQLVDDPATDHVVSWGDDDTTFVVWRPPEFARDLLPNYFKHNNFSSFVRQLNTYGFRKIVPDRWEFANEFFKRGEKHLLCEIHRRKTSQMIPQQHSPFMSHHHAPPQIPFSGGSFFPLPPPRVTTPEEDHYWCDDSPPSRPRVIPQQIDTAAQVTALSEDNERLRRSNTVLMSELAHMKKLYNDIIYFVQNHVKPVAPSNNSSYLSSFLQKQQQQQPPTLDYYNTATVNATNLNALNSSPPTSQSSITVLEDDHTNHHDQSNMRKTKLFGVSLPSSKKRSHHFSDQTSKTRLVLDQSDLALNLMTASTR</sequence>
<feature type="chain" id="PRO_0000270813" description="Heat stress transcription factor B-4">
    <location>
        <begin position="1"/>
        <end position="348"/>
    </location>
</feature>
<feature type="DNA-binding region" evidence="1">
    <location>
        <begin position="32"/>
        <end position="126"/>
    </location>
</feature>
<feature type="region of interest" description="Hydrophobic repeat HR-A/B">
    <location>
        <begin position="187"/>
        <end position="232"/>
    </location>
</feature>
<feature type="short sequence motif" description="Bipartite nuclear localization signal" evidence="2">
    <location>
        <begin position="303"/>
        <end position="318"/>
    </location>
</feature>
<feature type="short sequence motif" description="Nuclear export signal" evidence="2">
    <location>
        <begin position="338"/>
        <end position="343"/>
    </location>
</feature>